<name>RBGA_THEMA</name>
<evidence type="ECO:0000250" key="1">
    <source>
        <dbReference type="UniProtKB" id="O31743"/>
    </source>
</evidence>
<evidence type="ECO:0000255" key="2">
    <source>
        <dbReference type="PROSITE-ProRule" id="PRU01058"/>
    </source>
</evidence>
<evidence type="ECO:0000269" key="3">
    <source>
    </source>
</evidence>
<evidence type="ECO:0000303" key="4">
    <source>
    </source>
</evidence>
<evidence type="ECO:0000305" key="5"/>
<evidence type="ECO:0000312" key="6">
    <source>
        <dbReference type="EMBL" id="AAD35850.1"/>
    </source>
</evidence>
<evidence type="ECO:0000312" key="7">
    <source>
        <dbReference type="PDB" id="3CNN"/>
    </source>
</evidence>
<evidence type="ECO:0007829" key="8">
    <source>
        <dbReference type="PDB" id="3CNL"/>
    </source>
</evidence>
<keyword id="KW-0002">3D-structure</keyword>
<keyword id="KW-0963">Cytoplasm</keyword>
<keyword id="KW-0342">GTP-binding</keyword>
<keyword id="KW-0547">Nucleotide-binding</keyword>
<keyword id="KW-1185">Reference proteome</keyword>
<gene>
    <name evidence="1" type="primary">rbgA</name>
    <name evidence="4" type="synonym">ylqF</name>
    <name type="ordered locus">TM_0768</name>
</gene>
<protein>
    <recommendedName>
        <fullName evidence="1">Ribosome biogenesis GTPase A</fullName>
    </recommendedName>
</protein>
<accession>Q9WZM6</accession>
<dbReference type="EMBL" id="AE000512">
    <property type="protein sequence ID" value="AAD35850.1"/>
    <property type="molecule type" value="Genomic_DNA"/>
</dbReference>
<dbReference type="PIR" id="F72336">
    <property type="entry name" value="F72336"/>
</dbReference>
<dbReference type="RefSeq" id="NP_228577.1">
    <property type="nucleotide sequence ID" value="NC_000853.1"/>
</dbReference>
<dbReference type="RefSeq" id="WP_004080928.1">
    <property type="nucleotide sequence ID" value="NZ_CP011107.1"/>
</dbReference>
<dbReference type="PDB" id="3CNL">
    <property type="method" value="X-ray"/>
    <property type="resolution" value="2.00 A"/>
    <property type="chains" value="A=1-262"/>
</dbReference>
<dbReference type="PDB" id="3CNN">
    <property type="method" value="X-ray"/>
    <property type="resolution" value="2.30 A"/>
    <property type="chains" value="A=1-262"/>
</dbReference>
<dbReference type="PDB" id="3CNO">
    <property type="method" value="X-ray"/>
    <property type="resolution" value="2.30 A"/>
    <property type="chains" value="A=1-262"/>
</dbReference>
<dbReference type="PDBsum" id="3CNL"/>
<dbReference type="PDBsum" id="3CNN"/>
<dbReference type="PDBsum" id="3CNO"/>
<dbReference type="SMR" id="Q9WZM6"/>
<dbReference type="FunCoup" id="Q9WZM6">
    <property type="interactions" value="333"/>
</dbReference>
<dbReference type="STRING" id="243274.TM_0768"/>
<dbReference type="PaxDb" id="243274-THEMA_00810"/>
<dbReference type="DNASU" id="898436"/>
<dbReference type="EnsemblBacteria" id="AAD35850">
    <property type="protein sequence ID" value="AAD35850"/>
    <property type="gene ID" value="TM_0768"/>
</dbReference>
<dbReference type="KEGG" id="tma:TM0768"/>
<dbReference type="KEGG" id="tmi:THEMA_00810"/>
<dbReference type="KEGG" id="tmm:Tmari_0769"/>
<dbReference type="KEGG" id="tmw:THMA_0787"/>
<dbReference type="eggNOG" id="COG1161">
    <property type="taxonomic scope" value="Bacteria"/>
</dbReference>
<dbReference type="InParanoid" id="Q9WZM6"/>
<dbReference type="OrthoDB" id="9779790at2"/>
<dbReference type="EvolutionaryTrace" id="Q9WZM6"/>
<dbReference type="Proteomes" id="UP000008183">
    <property type="component" value="Chromosome"/>
</dbReference>
<dbReference type="GO" id="GO:0005737">
    <property type="term" value="C:cytoplasm"/>
    <property type="evidence" value="ECO:0007669"/>
    <property type="project" value="UniProtKB-SubCell"/>
</dbReference>
<dbReference type="GO" id="GO:0005525">
    <property type="term" value="F:GTP binding"/>
    <property type="evidence" value="ECO:0007669"/>
    <property type="project" value="UniProtKB-KW"/>
</dbReference>
<dbReference type="GO" id="GO:0003924">
    <property type="term" value="F:GTPase activity"/>
    <property type="evidence" value="ECO:0000318"/>
    <property type="project" value="GO_Central"/>
</dbReference>
<dbReference type="GO" id="GO:0006412">
    <property type="term" value="P:translation"/>
    <property type="evidence" value="ECO:0000318"/>
    <property type="project" value="GO_Central"/>
</dbReference>
<dbReference type="CDD" id="cd01856">
    <property type="entry name" value="YlqF"/>
    <property type="match status" value="1"/>
</dbReference>
<dbReference type="Gene3D" id="1.10.1580.10">
    <property type="match status" value="1"/>
</dbReference>
<dbReference type="Gene3D" id="3.40.50.300">
    <property type="entry name" value="P-loop containing nucleotide triphosphate hydrolases"/>
    <property type="match status" value="1"/>
</dbReference>
<dbReference type="InterPro" id="IPR030378">
    <property type="entry name" value="G_CP_dom"/>
</dbReference>
<dbReference type="InterPro" id="IPR006073">
    <property type="entry name" value="GTP-bd"/>
</dbReference>
<dbReference type="InterPro" id="IPR023179">
    <property type="entry name" value="GTP-bd_ortho_bundle_sf"/>
</dbReference>
<dbReference type="InterPro" id="IPR019991">
    <property type="entry name" value="GTP-bd_ribosome_bgen"/>
</dbReference>
<dbReference type="InterPro" id="IPR016478">
    <property type="entry name" value="GTPase_MTG1"/>
</dbReference>
<dbReference type="InterPro" id="IPR027417">
    <property type="entry name" value="P-loop_NTPase"/>
</dbReference>
<dbReference type="NCBIfam" id="TIGR03596">
    <property type="entry name" value="GTPase_YlqF"/>
    <property type="match status" value="1"/>
</dbReference>
<dbReference type="PANTHER" id="PTHR45782">
    <property type="entry name" value="MITOCHONDRIAL RIBOSOME-ASSOCIATED GTPASE 1"/>
    <property type="match status" value="1"/>
</dbReference>
<dbReference type="PANTHER" id="PTHR45782:SF4">
    <property type="entry name" value="MITOCHONDRIAL RIBOSOME-ASSOCIATED GTPASE 1"/>
    <property type="match status" value="1"/>
</dbReference>
<dbReference type="Pfam" id="PF01926">
    <property type="entry name" value="MMR_HSR1"/>
    <property type="match status" value="1"/>
</dbReference>
<dbReference type="PIRSF" id="PIRSF006230">
    <property type="entry name" value="MG442"/>
    <property type="match status" value="1"/>
</dbReference>
<dbReference type="SUPFAM" id="SSF52540">
    <property type="entry name" value="P-loop containing nucleoside triphosphate hydrolases"/>
    <property type="match status" value="1"/>
</dbReference>
<dbReference type="PROSITE" id="PS51721">
    <property type="entry name" value="G_CP"/>
    <property type="match status" value="1"/>
</dbReference>
<organism>
    <name type="scientific">Thermotoga maritima (strain ATCC 43589 / DSM 3109 / JCM 10099 / NBRC 100826 / MSB8)</name>
    <dbReference type="NCBI Taxonomy" id="243274"/>
    <lineage>
        <taxon>Bacteria</taxon>
        <taxon>Thermotogati</taxon>
        <taxon>Thermotogota</taxon>
        <taxon>Thermotogae</taxon>
        <taxon>Thermotogales</taxon>
        <taxon>Thermotogaceae</taxon>
        <taxon>Thermotoga</taxon>
    </lineage>
</organism>
<feature type="chain" id="PRO_0000409886" description="Ribosome biogenesis GTPase A">
    <location>
        <begin position="1"/>
        <end position="262"/>
    </location>
</feature>
<feature type="domain" description="CP-type G" evidence="2">
    <location>
        <begin position="12"/>
        <end position="157"/>
    </location>
</feature>
<feature type="binding site" evidence="3">
    <location>
        <begin position="54"/>
        <end position="57"/>
    </location>
    <ligand>
        <name>GTP</name>
        <dbReference type="ChEBI" id="CHEBI:37565"/>
    </ligand>
</feature>
<feature type="binding site" evidence="3">
    <location>
        <begin position="109"/>
        <end position="114"/>
    </location>
    <ligand>
        <name>GTP</name>
        <dbReference type="ChEBI" id="CHEBI:37565"/>
    </ligand>
</feature>
<feature type="binding site" evidence="3">
    <location>
        <position position="153"/>
    </location>
    <ligand>
        <name>GTP</name>
        <dbReference type="ChEBI" id="CHEBI:37565"/>
    </ligand>
</feature>
<feature type="helix" evidence="8">
    <location>
        <begin position="13"/>
        <end position="19"/>
    </location>
</feature>
<feature type="strand" evidence="8">
    <location>
        <begin position="23"/>
        <end position="30"/>
    </location>
</feature>
<feature type="turn" evidence="8">
    <location>
        <begin position="34"/>
        <end position="37"/>
    </location>
</feature>
<feature type="strand" evidence="8">
    <location>
        <begin position="47"/>
        <end position="54"/>
    </location>
</feature>
<feature type="helix" evidence="8">
    <location>
        <begin position="56"/>
        <end position="58"/>
    </location>
</feature>
<feature type="helix" evidence="8">
    <location>
        <begin position="61"/>
        <end position="73"/>
    </location>
</feature>
<feature type="strand" evidence="8">
    <location>
        <begin position="78"/>
        <end position="80"/>
    </location>
</feature>
<feature type="helix" evidence="8">
    <location>
        <begin position="87"/>
        <end position="94"/>
    </location>
</feature>
<feature type="strand" evidence="8">
    <location>
        <begin position="101"/>
        <end position="107"/>
    </location>
</feature>
<feature type="helix" evidence="8">
    <location>
        <begin position="112"/>
        <end position="120"/>
    </location>
</feature>
<feature type="strand" evidence="8">
    <location>
        <begin position="139"/>
        <end position="141"/>
    </location>
</feature>
<feature type="strand" evidence="8">
    <location>
        <begin position="147"/>
        <end position="151"/>
    </location>
</feature>
<feature type="helix" evidence="8">
    <location>
        <begin position="162"/>
        <end position="170"/>
    </location>
</feature>
<feature type="helix" evidence="8">
    <location>
        <begin position="176"/>
        <end position="178"/>
    </location>
</feature>
<feature type="helix" evidence="8">
    <location>
        <begin position="182"/>
        <end position="196"/>
    </location>
</feature>
<feature type="helix" evidence="8">
    <location>
        <begin position="202"/>
        <end position="212"/>
    </location>
</feature>
<feature type="helix" evidence="8">
    <location>
        <begin position="218"/>
        <end position="220"/>
    </location>
</feature>
<feature type="helix" evidence="8">
    <location>
        <begin position="224"/>
        <end position="236"/>
    </location>
</feature>
<feature type="turn" evidence="8">
    <location>
        <begin position="237"/>
        <end position="240"/>
    </location>
</feature>
<sequence>MSWYPGHIEKAKRQIKDLLRLVNTVVEVRDARAPFATSAYGVDFSRKETIILLNKVDIADEKTTKKWVEFFKKQGKRVITTHKGEPRKVLLKKLSFDRLARVLIVGVPNTGKSTIINKLKGKRASSVGAQPGITKGIQWFSLENGVKILDTPGILYKNIFSEDLAAKLLLVGSLPVERIEDQRIFERAFEIFARSIGIESSFSEFFEDFARKRGLLKKGGVPDIERALMLFFTEVAQGKAGRVSFERPEDITPVQQEQTRGV</sequence>
<proteinExistence type="evidence at protein level"/>
<reference evidence="6" key="1">
    <citation type="journal article" date="1999" name="Nature">
        <title>Evidence for lateral gene transfer between Archaea and Bacteria from genome sequence of Thermotoga maritima.</title>
        <authorList>
            <person name="Nelson K.E."/>
            <person name="Clayton R.A."/>
            <person name="Gill S.R."/>
            <person name="Gwinn M.L."/>
            <person name="Dodson R.J."/>
            <person name="Haft D.H."/>
            <person name="Hickey E.K."/>
            <person name="Peterson J.D."/>
            <person name="Nelson W.C."/>
            <person name="Ketchum K.A."/>
            <person name="McDonald L.A."/>
            <person name="Utterback T.R."/>
            <person name="Malek J.A."/>
            <person name="Linher K.D."/>
            <person name="Garrett M.M."/>
            <person name="Stewart A.M."/>
            <person name="Cotton M.D."/>
            <person name="Pratt M.S."/>
            <person name="Phillips C.A."/>
            <person name="Richardson D.L."/>
            <person name="Heidelberg J.F."/>
            <person name="Sutton G.G."/>
            <person name="Fleischmann R.D."/>
            <person name="Eisen J.A."/>
            <person name="White O."/>
            <person name="Salzberg S.L."/>
            <person name="Smith H.O."/>
            <person name="Venter J.C."/>
            <person name="Fraser C.M."/>
        </authorList>
    </citation>
    <scope>NUCLEOTIDE SEQUENCE [LARGE SCALE GENOMIC DNA]</scope>
    <source>
        <strain>ATCC 43589 / DSM 3109 / JCM 10099 / NBRC 100826 / MSB8</strain>
    </source>
</reference>
<reference evidence="5 7" key="2">
    <citation type="journal article" date="2008" name="Proteins">
        <title>Crystal structure of YlqF, a circularly permuted GTPase: implications for its GTPase activation in 50 S ribosomal subunit assembly.</title>
        <authorList>
            <person name="Kim D.J."/>
            <person name="Jang J.Y."/>
            <person name="Yoon H.J."/>
            <person name="Suh S.W."/>
        </authorList>
    </citation>
    <scope>X-RAY CRYSTALLOGRAPHY (2.00 ANGSTROMS) IN COMPLEXES WITH GTP; GDP AND GTP ANALOG</scope>
</reference>
<comment type="function">
    <text evidence="1">Required for a late step of 50S ribosomal subunit assembly. Has GTPase activity. Binds to the 23S rRNA (By similarity).</text>
</comment>
<comment type="subcellular location">
    <subcellularLocation>
        <location evidence="1 5">Cytoplasm</location>
    </subcellularLocation>
</comment>
<comment type="similarity">
    <text evidence="2">Belongs to the TRAFAC class YlqF/YawG GTPase family. MTG1 subfamily.</text>
</comment>